<organism>
    <name type="scientific">Agelenopsis aperta</name>
    <name type="common">North American funnel-web spider</name>
    <name type="synonym">Agelenopsis gertschi</name>
    <dbReference type="NCBI Taxonomy" id="6908"/>
    <lineage>
        <taxon>Eukaryota</taxon>
        <taxon>Metazoa</taxon>
        <taxon>Ecdysozoa</taxon>
        <taxon>Arthropoda</taxon>
        <taxon>Chelicerata</taxon>
        <taxon>Arachnida</taxon>
        <taxon>Araneae</taxon>
        <taxon>Araneomorphae</taxon>
        <taxon>Entelegynae</taxon>
        <taxon>Agelenidae</taxon>
        <taxon>Agelenopsis</taxon>
    </lineage>
</organism>
<name>T4G1F_AGEAP</name>
<protein>
    <recommendedName>
        <fullName evidence="5">Mu-agatoxin-Aa1f</fullName>
        <shortName evidence="5">Mu-AGTX-Aa1f</shortName>
    </recommendedName>
    <alternativeName>
        <fullName evidence="4">Mu-agatoxin VI</fullName>
        <shortName evidence="4">Mu-Aga VI</shortName>
    </alternativeName>
    <alternativeName>
        <fullName evidence="5">Mu-agatoxin-6</fullName>
    </alternativeName>
</protein>
<feature type="peptide" id="PRO_0000044960" description="Mu-agatoxin-Aa1f" evidence="3">
    <location>
        <begin position="1"/>
        <end position="37"/>
    </location>
</feature>
<feature type="modified residue" description="Asparagine amide" evidence="6">
    <location>
        <position position="37"/>
    </location>
</feature>
<feature type="disulfide bond" evidence="2">
    <location>
        <begin position="2"/>
        <end position="18"/>
    </location>
</feature>
<feature type="disulfide bond" evidence="2">
    <location>
        <begin position="9"/>
        <end position="23"/>
    </location>
</feature>
<feature type="disulfide bond" evidence="2">
    <location>
        <begin position="17"/>
        <end position="33"/>
    </location>
</feature>
<feature type="disulfide bond" evidence="2">
    <location>
        <begin position="25"/>
        <end position="31"/>
    </location>
</feature>
<sequence>DCVGESQQCADWAGPHCCDGYYCTCRYFPKCICVNNN</sequence>
<accession>P11062</accession>
<evidence type="ECO:0000250" key="1"/>
<evidence type="ECO:0000250" key="2">
    <source>
        <dbReference type="UniProtKB" id="P11061"/>
    </source>
</evidence>
<evidence type="ECO:0000269" key="3">
    <source>
    </source>
</evidence>
<evidence type="ECO:0000303" key="4">
    <source>
    </source>
</evidence>
<evidence type="ECO:0000305" key="5"/>
<evidence type="ECO:0000305" key="6">
    <source>
    </source>
</evidence>
<comment type="function">
    <text evidence="3">Insecticidal neurotoxin that induces an irreversible spastic paralysis when injected into insects. Modifies presynaptic voltage-gated sodium channels (Nav), causing them to open at the normal resting potential of the nerve. This leads to spontaneous release of neurotransmitter and repetitive action potentials in motor neurons.</text>
</comment>
<comment type="subcellular location">
    <subcellularLocation>
        <location evidence="3">Secreted</location>
    </subcellularLocation>
</comment>
<comment type="tissue specificity">
    <text evidence="6">Expressed by the venom gland.</text>
</comment>
<comment type="domain">
    <text evidence="1">The presence of a 'disulfide through disulfide knot' structurally defines this protein as a knottin.</text>
</comment>
<comment type="toxic dose">
    <text evidence="3">LD(50) is 38 +-12 mg/kg into third stadium larvae of M.sexta.</text>
</comment>
<comment type="similarity">
    <text evidence="5">Belongs to the neurotoxin 07 (Beta/delta-agtx) family. 03 (aga-4) subfamily. Aga sub-subfamily.</text>
</comment>
<dbReference type="PIR" id="F32038">
    <property type="entry name" value="F32038"/>
</dbReference>
<dbReference type="SMR" id="P11062"/>
<dbReference type="ArachnoServer" id="AS000385">
    <property type="toxin name" value="mu-agatoxin-Aa1f"/>
</dbReference>
<dbReference type="GO" id="GO:0005576">
    <property type="term" value="C:extracellular region"/>
    <property type="evidence" value="ECO:0007669"/>
    <property type="project" value="UniProtKB-SubCell"/>
</dbReference>
<dbReference type="GO" id="GO:0044231">
    <property type="term" value="C:host cell presynaptic membrane"/>
    <property type="evidence" value="ECO:0007669"/>
    <property type="project" value="UniProtKB-KW"/>
</dbReference>
<dbReference type="GO" id="GO:0017080">
    <property type="term" value="F:sodium channel regulator activity"/>
    <property type="evidence" value="ECO:0007669"/>
    <property type="project" value="UniProtKB-KW"/>
</dbReference>
<dbReference type="GO" id="GO:0090729">
    <property type="term" value="F:toxin activity"/>
    <property type="evidence" value="ECO:0007669"/>
    <property type="project" value="UniProtKB-KW"/>
</dbReference>
<dbReference type="InterPro" id="IPR016328">
    <property type="entry name" value="Beta/delta-agatoxin_fam"/>
</dbReference>
<dbReference type="Pfam" id="PF05980">
    <property type="entry name" value="Toxin_7"/>
    <property type="match status" value="1"/>
</dbReference>
<dbReference type="PIRSF" id="PIRSF001882">
    <property type="entry name" value="Curtatoxin"/>
    <property type="match status" value="1"/>
</dbReference>
<dbReference type="SUPFAM" id="SSF57059">
    <property type="entry name" value="omega toxin-like"/>
    <property type="match status" value="1"/>
</dbReference>
<dbReference type="PROSITE" id="PS60015">
    <property type="entry name" value="MU_AGATOXIN"/>
    <property type="match status" value="1"/>
</dbReference>
<reference key="1">
    <citation type="journal article" date="1989" name="J. Biol. Chem.">
        <title>Purification and characterization of two classes of neurotoxins from the funnel web spider, Agelenopsis aperta.</title>
        <authorList>
            <person name="Skinner W.S."/>
            <person name="Adams M.E."/>
            <person name="Quistad G.B."/>
            <person name="Kataoka H."/>
            <person name="Cesarin B.J."/>
            <person name="Enderlin F.E."/>
            <person name="Schooley D.A."/>
        </authorList>
    </citation>
    <scope>PROTEIN SEQUENCE</scope>
    <scope>FUNCTION</scope>
    <scope>SUBCELLULAR LOCATION</scope>
    <scope>TOXIC DOSE</scope>
    <scope>PROBABLE AMIDATION AT ASN-37</scope>
    <source>
        <tissue>Venom</tissue>
    </source>
</reference>
<reference key="2">
    <citation type="journal article" date="2004" name="Toxicon">
        <title>Agatoxins: ion channel specific toxins from the American funnel web spider, Agelenopsis aperta.</title>
        <authorList>
            <person name="Adams M.E."/>
        </authorList>
    </citation>
    <scope>REVIEW</scope>
</reference>
<proteinExistence type="evidence at protein level"/>
<keyword id="KW-0027">Amidation</keyword>
<keyword id="KW-0903">Direct protein sequencing</keyword>
<keyword id="KW-1015">Disulfide bond</keyword>
<keyword id="KW-0872">Ion channel impairing toxin</keyword>
<keyword id="KW-0960">Knottin</keyword>
<keyword id="KW-0528">Neurotoxin</keyword>
<keyword id="KW-0638">Presynaptic neurotoxin</keyword>
<keyword id="KW-0964">Secreted</keyword>
<keyword id="KW-0800">Toxin</keyword>
<keyword id="KW-0738">Voltage-gated sodium channel impairing toxin</keyword>